<gene>
    <name evidence="1" type="primary">ureG</name>
    <name type="ordered locus">KRH_21680</name>
</gene>
<accession>B2GI03</accession>
<name>UREG_KOCRD</name>
<feature type="chain" id="PRO_1000145183" description="Urease accessory protein UreG">
    <location>
        <begin position="1"/>
        <end position="203"/>
    </location>
</feature>
<feature type="binding site" evidence="1">
    <location>
        <begin position="10"/>
        <end position="17"/>
    </location>
    <ligand>
        <name>GTP</name>
        <dbReference type="ChEBI" id="CHEBI:37565"/>
    </ligand>
</feature>
<sequence length="203" mass="22301">MDPVIIGVGGPVGAGKTQLVERLTRAMSHEISMAAITNDIYTIEDAKILARTSVLPEERIIGLETGGCPHTAIREDTSMNEAAIEQLKKRFPDLQVIFVESGGDNLSATFSPELVDFSIYVIDVAQGEKIPRKAGQGMIKSDLFVINKTDLAPHVGADLGVMEEDSRVFRKDKPFAFTNLKTDEGLERVQEWIRTDVLMLDLA</sequence>
<proteinExistence type="inferred from homology"/>
<organism>
    <name type="scientific">Kocuria rhizophila (strain ATCC 9341 / DSM 348 / NBRC 103217 / DC2201)</name>
    <dbReference type="NCBI Taxonomy" id="378753"/>
    <lineage>
        <taxon>Bacteria</taxon>
        <taxon>Bacillati</taxon>
        <taxon>Actinomycetota</taxon>
        <taxon>Actinomycetes</taxon>
        <taxon>Micrococcales</taxon>
        <taxon>Micrococcaceae</taxon>
        <taxon>Kocuria</taxon>
    </lineage>
</organism>
<dbReference type="EMBL" id="AP009152">
    <property type="protein sequence ID" value="BAG30515.1"/>
    <property type="molecule type" value="Genomic_DNA"/>
</dbReference>
<dbReference type="RefSeq" id="WP_012399236.1">
    <property type="nucleotide sequence ID" value="NC_010617.1"/>
</dbReference>
<dbReference type="SMR" id="B2GI03"/>
<dbReference type="STRING" id="378753.KRH_21680"/>
<dbReference type="KEGG" id="krh:KRH_21680"/>
<dbReference type="eggNOG" id="COG0378">
    <property type="taxonomic scope" value="Bacteria"/>
</dbReference>
<dbReference type="HOGENOM" id="CLU_072144_1_0_11"/>
<dbReference type="OrthoDB" id="9802035at2"/>
<dbReference type="Proteomes" id="UP000008838">
    <property type="component" value="Chromosome"/>
</dbReference>
<dbReference type="GO" id="GO:0005737">
    <property type="term" value="C:cytoplasm"/>
    <property type="evidence" value="ECO:0007669"/>
    <property type="project" value="UniProtKB-SubCell"/>
</dbReference>
<dbReference type="GO" id="GO:0005525">
    <property type="term" value="F:GTP binding"/>
    <property type="evidence" value="ECO:0007669"/>
    <property type="project" value="UniProtKB-KW"/>
</dbReference>
<dbReference type="GO" id="GO:0003924">
    <property type="term" value="F:GTPase activity"/>
    <property type="evidence" value="ECO:0007669"/>
    <property type="project" value="InterPro"/>
</dbReference>
<dbReference type="GO" id="GO:0016151">
    <property type="term" value="F:nickel cation binding"/>
    <property type="evidence" value="ECO:0007669"/>
    <property type="project" value="UniProtKB-UniRule"/>
</dbReference>
<dbReference type="GO" id="GO:0043419">
    <property type="term" value="P:urea catabolic process"/>
    <property type="evidence" value="ECO:0007669"/>
    <property type="project" value="InterPro"/>
</dbReference>
<dbReference type="CDD" id="cd05540">
    <property type="entry name" value="UreG"/>
    <property type="match status" value="1"/>
</dbReference>
<dbReference type="Gene3D" id="3.40.50.300">
    <property type="entry name" value="P-loop containing nucleotide triphosphate hydrolases"/>
    <property type="match status" value="1"/>
</dbReference>
<dbReference type="HAMAP" id="MF_01389">
    <property type="entry name" value="UreG"/>
    <property type="match status" value="1"/>
</dbReference>
<dbReference type="InterPro" id="IPR003495">
    <property type="entry name" value="CobW/HypB/UreG_nucleotide-bd"/>
</dbReference>
<dbReference type="InterPro" id="IPR027417">
    <property type="entry name" value="P-loop_NTPase"/>
</dbReference>
<dbReference type="InterPro" id="IPR004400">
    <property type="entry name" value="UreG"/>
</dbReference>
<dbReference type="NCBIfam" id="TIGR00101">
    <property type="entry name" value="ureG"/>
    <property type="match status" value="1"/>
</dbReference>
<dbReference type="PANTHER" id="PTHR31715">
    <property type="entry name" value="UREASE ACCESSORY PROTEIN G"/>
    <property type="match status" value="1"/>
</dbReference>
<dbReference type="PANTHER" id="PTHR31715:SF0">
    <property type="entry name" value="UREASE ACCESSORY PROTEIN G"/>
    <property type="match status" value="1"/>
</dbReference>
<dbReference type="Pfam" id="PF02492">
    <property type="entry name" value="cobW"/>
    <property type="match status" value="1"/>
</dbReference>
<dbReference type="PIRSF" id="PIRSF005624">
    <property type="entry name" value="Ni-bind_GTPase"/>
    <property type="match status" value="1"/>
</dbReference>
<dbReference type="SUPFAM" id="SSF52540">
    <property type="entry name" value="P-loop containing nucleoside triphosphate hydrolases"/>
    <property type="match status" value="1"/>
</dbReference>
<keyword id="KW-0143">Chaperone</keyword>
<keyword id="KW-0963">Cytoplasm</keyword>
<keyword id="KW-0342">GTP-binding</keyword>
<keyword id="KW-0996">Nickel insertion</keyword>
<keyword id="KW-0547">Nucleotide-binding</keyword>
<keyword id="KW-1185">Reference proteome</keyword>
<reference key="1">
    <citation type="journal article" date="2008" name="J. Bacteriol.">
        <title>Complete genome sequence of the soil actinomycete Kocuria rhizophila.</title>
        <authorList>
            <person name="Takarada H."/>
            <person name="Sekine M."/>
            <person name="Kosugi H."/>
            <person name="Matsuo Y."/>
            <person name="Fujisawa T."/>
            <person name="Omata S."/>
            <person name="Kishi E."/>
            <person name="Shimizu A."/>
            <person name="Tsukatani N."/>
            <person name="Tanikawa S."/>
            <person name="Fujita N."/>
            <person name="Harayama S."/>
        </authorList>
    </citation>
    <scope>NUCLEOTIDE SEQUENCE [LARGE SCALE GENOMIC DNA]</scope>
    <source>
        <strain>ATCC 9341 / DSM 348 / NBRC 103217 / DC2201</strain>
    </source>
</reference>
<evidence type="ECO:0000255" key="1">
    <source>
        <dbReference type="HAMAP-Rule" id="MF_01389"/>
    </source>
</evidence>
<comment type="function">
    <text evidence="1">Facilitates the functional incorporation of the urease nickel metallocenter. This process requires GTP hydrolysis, probably effectuated by UreG.</text>
</comment>
<comment type="subunit">
    <text evidence="1">Homodimer. UreD, UreF and UreG form a complex that acts as a GTP-hydrolysis-dependent molecular chaperone, activating the urease apoprotein by helping to assemble the nickel containing metallocenter of UreC. The UreE protein probably delivers the nickel.</text>
</comment>
<comment type="subcellular location">
    <subcellularLocation>
        <location evidence="1">Cytoplasm</location>
    </subcellularLocation>
</comment>
<comment type="similarity">
    <text evidence="1">Belongs to the SIMIBI class G3E GTPase family. UreG subfamily.</text>
</comment>
<protein>
    <recommendedName>
        <fullName evidence="1">Urease accessory protein UreG</fullName>
    </recommendedName>
</protein>